<dbReference type="EC" id="2.4.2.29" evidence="1"/>
<dbReference type="EMBL" id="CP000728">
    <property type="protein sequence ID" value="ABS42721.1"/>
    <property type="molecule type" value="Genomic_DNA"/>
</dbReference>
<dbReference type="RefSeq" id="WP_003403621.1">
    <property type="nucleotide sequence ID" value="NC_009699.1"/>
</dbReference>
<dbReference type="SMR" id="A7GHT6"/>
<dbReference type="KEGG" id="cbf:CLI_3127"/>
<dbReference type="HOGENOM" id="CLU_022060_0_1_9"/>
<dbReference type="UniPathway" id="UPA00392"/>
<dbReference type="Proteomes" id="UP000002410">
    <property type="component" value="Chromosome"/>
</dbReference>
<dbReference type="GO" id="GO:0005829">
    <property type="term" value="C:cytosol"/>
    <property type="evidence" value="ECO:0007669"/>
    <property type="project" value="TreeGrafter"/>
</dbReference>
<dbReference type="GO" id="GO:0046872">
    <property type="term" value="F:metal ion binding"/>
    <property type="evidence" value="ECO:0007669"/>
    <property type="project" value="UniProtKB-KW"/>
</dbReference>
<dbReference type="GO" id="GO:0008479">
    <property type="term" value="F:tRNA-guanosine(34) queuine transglycosylase activity"/>
    <property type="evidence" value="ECO:0007669"/>
    <property type="project" value="UniProtKB-UniRule"/>
</dbReference>
<dbReference type="GO" id="GO:0008616">
    <property type="term" value="P:queuosine biosynthetic process"/>
    <property type="evidence" value="ECO:0007669"/>
    <property type="project" value="UniProtKB-UniRule"/>
</dbReference>
<dbReference type="GO" id="GO:0002099">
    <property type="term" value="P:tRNA wobble guanine modification"/>
    <property type="evidence" value="ECO:0007669"/>
    <property type="project" value="TreeGrafter"/>
</dbReference>
<dbReference type="GO" id="GO:0101030">
    <property type="term" value="P:tRNA-guanine transglycosylation"/>
    <property type="evidence" value="ECO:0007669"/>
    <property type="project" value="InterPro"/>
</dbReference>
<dbReference type="FunFam" id="3.20.20.105:FF:000001">
    <property type="entry name" value="Queuine tRNA-ribosyltransferase"/>
    <property type="match status" value="1"/>
</dbReference>
<dbReference type="Gene3D" id="3.20.20.105">
    <property type="entry name" value="Queuine tRNA-ribosyltransferase-like"/>
    <property type="match status" value="1"/>
</dbReference>
<dbReference type="HAMAP" id="MF_00168">
    <property type="entry name" value="Q_tRNA_Tgt"/>
    <property type="match status" value="1"/>
</dbReference>
<dbReference type="InterPro" id="IPR050076">
    <property type="entry name" value="ArchSynthase1/Queuine_TRR"/>
</dbReference>
<dbReference type="InterPro" id="IPR004803">
    <property type="entry name" value="TGT"/>
</dbReference>
<dbReference type="InterPro" id="IPR036511">
    <property type="entry name" value="TGT-like_sf"/>
</dbReference>
<dbReference type="InterPro" id="IPR002616">
    <property type="entry name" value="tRNA_ribo_trans-like"/>
</dbReference>
<dbReference type="NCBIfam" id="TIGR00430">
    <property type="entry name" value="Q_tRNA_tgt"/>
    <property type="match status" value="1"/>
</dbReference>
<dbReference type="NCBIfam" id="TIGR00449">
    <property type="entry name" value="tgt_general"/>
    <property type="match status" value="1"/>
</dbReference>
<dbReference type="PANTHER" id="PTHR46499">
    <property type="entry name" value="QUEUINE TRNA-RIBOSYLTRANSFERASE"/>
    <property type="match status" value="1"/>
</dbReference>
<dbReference type="PANTHER" id="PTHR46499:SF1">
    <property type="entry name" value="QUEUINE TRNA-RIBOSYLTRANSFERASE"/>
    <property type="match status" value="1"/>
</dbReference>
<dbReference type="Pfam" id="PF01702">
    <property type="entry name" value="TGT"/>
    <property type="match status" value="1"/>
</dbReference>
<dbReference type="SUPFAM" id="SSF51713">
    <property type="entry name" value="tRNA-guanine transglycosylase"/>
    <property type="match status" value="1"/>
</dbReference>
<evidence type="ECO:0000255" key="1">
    <source>
        <dbReference type="HAMAP-Rule" id="MF_00168"/>
    </source>
</evidence>
<sequence>MYKLLKKSGKARRGEFTTPHGVIQTPVFMNVGTLAAIKGAVSSMDLKEIGCQVELSNTYHLHLRPGDEVVKKMGGLHKFMNWDRPILTDSGGFQVFSLSKIRKIQEEGVYFNSHIDGRKIFMGPEESMRIQSNLASTIAMAFDECVENPAPREYVEKSVERTTRWLHRCKDEMNRLNSLPDTINNKQMLFGINQGGTYEDIRIEHAKTIAKMDLDGYAIGGLAVGESHEDMYRIIDAVVPHLPEDKPIYLMGVGIPSNILEAVDRGVDFFDCVLPARNGRHAHVFTKEGKINLLNAKFELDDKPIDEGCQCPACKHYTRSYIRHLFKAKEMLAMRLCVLHNLYFYNNLMEEIRDAIDGDYFKEYKERKLKEWGGRA</sequence>
<name>TGT_CLOBL</name>
<reference key="1">
    <citation type="submission" date="2007-06" db="EMBL/GenBank/DDBJ databases">
        <authorList>
            <person name="Brinkac L.M."/>
            <person name="Daugherty S."/>
            <person name="Dodson R.J."/>
            <person name="Madupu R."/>
            <person name="Brown J.L."/>
            <person name="Bruce D."/>
            <person name="Detter C."/>
            <person name="Munk C."/>
            <person name="Smith L.A."/>
            <person name="Smith T.J."/>
            <person name="White O."/>
            <person name="Brettin T.S."/>
        </authorList>
    </citation>
    <scope>NUCLEOTIDE SEQUENCE [LARGE SCALE GENOMIC DNA]</scope>
    <source>
        <strain>Langeland / NCTC 10281 / Type F</strain>
    </source>
</reference>
<feature type="chain" id="PRO_1000016781" description="Queuine tRNA-ribosyltransferase">
    <location>
        <begin position="1"/>
        <end position="376"/>
    </location>
</feature>
<feature type="region of interest" description="RNA binding" evidence="1">
    <location>
        <begin position="252"/>
        <end position="258"/>
    </location>
</feature>
<feature type="region of interest" description="RNA binding; important for wobble base 34 recognition" evidence="1">
    <location>
        <begin position="276"/>
        <end position="280"/>
    </location>
</feature>
<feature type="active site" description="Proton acceptor" evidence="1">
    <location>
        <position position="89"/>
    </location>
</feature>
<feature type="active site" description="Nucleophile" evidence="1">
    <location>
        <position position="271"/>
    </location>
</feature>
<feature type="binding site" evidence="1">
    <location>
        <begin position="89"/>
        <end position="93"/>
    </location>
    <ligand>
        <name>substrate</name>
    </ligand>
</feature>
<feature type="binding site" evidence="1">
    <location>
        <position position="143"/>
    </location>
    <ligand>
        <name>substrate</name>
    </ligand>
</feature>
<feature type="binding site" evidence="1">
    <location>
        <position position="194"/>
    </location>
    <ligand>
        <name>substrate</name>
    </ligand>
</feature>
<feature type="binding site" evidence="1">
    <location>
        <position position="221"/>
    </location>
    <ligand>
        <name>substrate</name>
    </ligand>
</feature>
<feature type="binding site" evidence="1">
    <location>
        <position position="309"/>
    </location>
    <ligand>
        <name>Zn(2+)</name>
        <dbReference type="ChEBI" id="CHEBI:29105"/>
    </ligand>
</feature>
<feature type="binding site" evidence="1">
    <location>
        <position position="311"/>
    </location>
    <ligand>
        <name>Zn(2+)</name>
        <dbReference type="ChEBI" id="CHEBI:29105"/>
    </ligand>
</feature>
<feature type="binding site" evidence="1">
    <location>
        <position position="314"/>
    </location>
    <ligand>
        <name>Zn(2+)</name>
        <dbReference type="ChEBI" id="CHEBI:29105"/>
    </ligand>
</feature>
<feature type="binding site" evidence="1">
    <location>
        <position position="340"/>
    </location>
    <ligand>
        <name>Zn(2+)</name>
        <dbReference type="ChEBI" id="CHEBI:29105"/>
    </ligand>
</feature>
<accession>A7GHT6</accession>
<proteinExistence type="inferred from homology"/>
<protein>
    <recommendedName>
        <fullName evidence="1">Queuine tRNA-ribosyltransferase</fullName>
        <ecNumber evidence="1">2.4.2.29</ecNumber>
    </recommendedName>
    <alternativeName>
        <fullName evidence="1">Guanine insertion enzyme</fullName>
    </alternativeName>
    <alternativeName>
        <fullName evidence="1">tRNA-guanine transglycosylase</fullName>
    </alternativeName>
</protein>
<organism>
    <name type="scientific">Clostridium botulinum (strain Langeland / NCTC 10281 / Type F)</name>
    <dbReference type="NCBI Taxonomy" id="441772"/>
    <lineage>
        <taxon>Bacteria</taxon>
        <taxon>Bacillati</taxon>
        <taxon>Bacillota</taxon>
        <taxon>Clostridia</taxon>
        <taxon>Eubacteriales</taxon>
        <taxon>Clostridiaceae</taxon>
        <taxon>Clostridium</taxon>
    </lineage>
</organism>
<comment type="function">
    <text evidence="1">Catalyzes the base-exchange of a guanine (G) residue with the queuine precursor 7-aminomethyl-7-deazaguanine (PreQ1) at position 34 (anticodon wobble position) in tRNAs with GU(N) anticodons (tRNA-Asp, -Asn, -His and -Tyr). Catalysis occurs through a double-displacement mechanism. The nucleophile active site attacks the C1' of nucleotide 34 to detach the guanine base from the RNA, forming a covalent enzyme-RNA intermediate. The proton acceptor active site deprotonates the incoming PreQ1, allowing a nucleophilic attack on the C1' of the ribose to form the product. After dissociation, two additional enzymatic reactions on the tRNA convert PreQ1 to queuine (Q), resulting in the hypermodified nucleoside queuosine (7-(((4,5-cis-dihydroxy-2-cyclopenten-1-yl)amino)methyl)-7-deazaguanosine).</text>
</comment>
<comment type="catalytic activity">
    <reaction evidence="1">
        <text>7-aminomethyl-7-carbaguanine + guanosine(34) in tRNA = 7-aminomethyl-7-carbaguanosine(34) in tRNA + guanine</text>
        <dbReference type="Rhea" id="RHEA:24104"/>
        <dbReference type="Rhea" id="RHEA-COMP:10341"/>
        <dbReference type="Rhea" id="RHEA-COMP:10342"/>
        <dbReference type="ChEBI" id="CHEBI:16235"/>
        <dbReference type="ChEBI" id="CHEBI:58703"/>
        <dbReference type="ChEBI" id="CHEBI:74269"/>
        <dbReference type="ChEBI" id="CHEBI:82833"/>
        <dbReference type="EC" id="2.4.2.29"/>
    </reaction>
</comment>
<comment type="cofactor">
    <cofactor evidence="1">
        <name>Zn(2+)</name>
        <dbReference type="ChEBI" id="CHEBI:29105"/>
    </cofactor>
    <text evidence="1">Binds 1 zinc ion per subunit.</text>
</comment>
<comment type="pathway">
    <text evidence="1">tRNA modification; tRNA-queuosine biosynthesis.</text>
</comment>
<comment type="subunit">
    <text evidence="1">Homodimer. Within each dimer, one monomer is responsible for RNA recognition and catalysis, while the other monomer binds to the replacement base PreQ1.</text>
</comment>
<comment type="similarity">
    <text evidence="1">Belongs to the queuine tRNA-ribosyltransferase family.</text>
</comment>
<gene>
    <name evidence="1" type="primary">tgt</name>
    <name type="ordered locus">CLI_3127</name>
</gene>
<keyword id="KW-0328">Glycosyltransferase</keyword>
<keyword id="KW-0479">Metal-binding</keyword>
<keyword id="KW-0671">Queuosine biosynthesis</keyword>
<keyword id="KW-0808">Transferase</keyword>
<keyword id="KW-0819">tRNA processing</keyword>
<keyword id="KW-0862">Zinc</keyword>